<proteinExistence type="inferred from homology"/>
<dbReference type="EMBL" id="AF454544">
    <property type="protein sequence ID" value="AAN52528.1"/>
    <property type="molecule type" value="Genomic_DNA"/>
</dbReference>
<dbReference type="EMBL" id="AEOI02000005">
    <property type="protein sequence ID" value="ESX01421.1"/>
    <property type="molecule type" value="Genomic_DNA"/>
</dbReference>
<dbReference type="RefSeq" id="XP_013936255.1">
    <property type="nucleotide sequence ID" value="XM_014080780.1"/>
</dbReference>
<dbReference type="SMR" id="Q8J2J3"/>
<dbReference type="STRING" id="871575.Q8J2J3"/>
<dbReference type="GeneID" id="25770284"/>
<dbReference type="KEGG" id="opa:HPODL_00815"/>
<dbReference type="eggNOG" id="KOG1947">
    <property type="taxonomic scope" value="Eukaryota"/>
</dbReference>
<dbReference type="HOGENOM" id="CLU_031725_0_0_1"/>
<dbReference type="OMA" id="IGLAGCH"/>
<dbReference type="OrthoDB" id="550575at2759"/>
<dbReference type="Proteomes" id="UP000008673">
    <property type="component" value="Chromosome III"/>
</dbReference>
<dbReference type="GO" id="GO:0005737">
    <property type="term" value="C:cytoplasm"/>
    <property type="evidence" value="ECO:0007669"/>
    <property type="project" value="UniProtKB-SubCell"/>
</dbReference>
<dbReference type="GO" id="GO:0005634">
    <property type="term" value="C:nucleus"/>
    <property type="evidence" value="ECO:0007669"/>
    <property type="project" value="UniProtKB-SubCell"/>
</dbReference>
<dbReference type="GO" id="GO:0019005">
    <property type="term" value="C:SCF ubiquitin ligase complex"/>
    <property type="evidence" value="ECO:0007669"/>
    <property type="project" value="TreeGrafter"/>
</dbReference>
<dbReference type="GO" id="GO:0051301">
    <property type="term" value="P:cell division"/>
    <property type="evidence" value="ECO:0007669"/>
    <property type="project" value="UniProtKB-KW"/>
</dbReference>
<dbReference type="GO" id="GO:0031146">
    <property type="term" value="P:SCF-dependent proteasomal ubiquitin-dependent protein catabolic process"/>
    <property type="evidence" value="ECO:0007669"/>
    <property type="project" value="TreeGrafter"/>
</dbReference>
<dbReference type="CDD" id="cd09293">
    <property type="entry name" value="AMN1"/>
    <property type="match status" value="1"/>
</dbReference>
<dbReference type="Gene3D" id="3.80.10.10">
    <property type="entry name" value="Ribonuclease Inhibitor"/>
    <property type="match status" value="1"/>
</dbReference>
<dbReference type="InterPro" id="IPR001611">
    <property type="entry name" value="Leu-rich_rpt"/>
</dbReference>
<dbReference type="InterPro" id="IPR006553">
    <property type="entry name" value="Leu-rich_rpt_Cys-con_subtyp"/>
</dbReference>
<dbReference type="InterPro" id="IPR032675">
    <property type="entry name" value="LRR_dom_sf"/>
</dbReference>
<dbReference type="PANTHER" id="PTHR13318:SF95">
    <property type="entry name" value="F-BOX PROTEIN YLR352W"/>
    <property type="match status" value="1"/>
</dbReference>
<dbReference type="PANTHER" id="PTHR13318">
    <property type="entry name" value="PARTNER OF PAIRED, ISOFORM B-RELATED"/>
    <property type="match status" value="1"/>
</dbReference>
<dbReference type="Pfam" id="PF13516">
    <property type="entry name" value="LRR_6"/>
    <property type="match status" value="1"/>
</dbReference>
<dbReference type="SMART" id="SM00367">
    <property type="entry name" value="LRR_CC"/>
    <property type="match status" value="3"/>
</dbReference>
<dbReference type="SUPFAM" id="SSF52047">
    <property type="entry name" value="RNI-like"/>
    <property type="match status" value="1"/>
</dbReference>
<organism>
    <name type="scientific">Ogataea parapolymorpha (strain ATCC 26012 / BCRC 20466 / JCM 22074 / NRRL Y-7560 / DL-1)</name>
    <name type="common">Yeast</name>
    <name type="synonym">Hansenula polymorpha</name>
    <dbReference type="NCBI Taxonomy" id="871575"/>
    <lineage>
        <taxon>Eukaryota</taxon>
        <taxon>Fungi</taxon>
        <taxon>Dikarya</taxon>
        <taxon>Ascomycota</taxon>
        <taxon>Saccharomycotina</taxon>
        <taxon>Pichiomycetes</taxon>
        <taxon>Pichiales</taxon>
        <taxon>Pichiaceae</taxon>
        <taxon>Ogataea</taxon>
    </lineage>
</organism>
<comment type="function">
    <text evidence="1">Negative regulator of the mitotic exit network (MEN), required for multiple cell cycle checkpoints. Required for daughter cell separation and chromosome stability. Involved in copper sensitivity.</text>
</comment>
<comment type="subcellular location">
    <subcellularLocation>
        <location evidence="2">Cytoplasm</location>
    </subcellularLocation>
    <subcellularLocation>
        <location evidence="2">Nucleus</location>
    </subcellularLocation>
</comment>
<comment type="similarity">
    <text evidence="4">Belongs to the AMN1 family.</text>
</comment>
<evidence type="ECO:0000250" key="1"/>
<evidence type="ECO:0000250" key="2">
    <source>
        <dbReference type="UniProtKB" id="P38285"/>
    </source>
</evidence>
<evidence type="ECO:0000256" key="3">
    <source>
        <dbReference type="SAM" id="MobiDB-lite"/>
    </source>
</evidence>
<evidence type="ECO:0000305" key="4"/>
<keyword id="KW-0131">Cell cycle</keyword>
<keyword id="KW-0132">Cell division</keyword>
<keyword id="KW-0963">Cytoplasm</keyword>
<keyword id="KW-0498">Mitosis</keyword>
<keyword id="KW-0539">Nucleus</keyword>
<keyword id="KW-1185">Reference proteome</keyword>
<gene>
    <name type="primary">AMN1</name>
    <name type="ORF">HPODL_00815</name>
</gene>
<protein>
    <recommendedName>
        <fullName>Antagonist of mitotic exit network protein 1</fullName>
    </recommendedName>
</protein>
<sequence length="511" mass="58087">MWDLAQQYPDTTPESSPLHETRARERRSSLVDHRPLKRASSLSFRIHTPCDYSSGASMTSCTSSTSLSSLGSLSSSARQLIMSRKTSPRHPTRLKTRFFSPFHSTNTSPVSPRLLETVEKLSIDNDAHPIFEIPEIVNLILHYVGHDDRERVPTEHAPVRKPPMSLNHAKLIHGEQGEKVWQRTLSTSSTAPPTGNLHNCLLVNKLWHSLTLEVLQENLYFDSDFKLMNYSPPRIAAPKSFVLHKLKSTQQRDLANLHINPVNLEWLEFYICPKLLPSLHLYTAKLKKLVLPGSKVVDDVYLQQIAPLMPNLVHLDLRACEHITDAGLYAIGTHCPKIETLNCGRHTKGILVTDASISHIVANCNLKTLGVAGCGVSDAILWSLAYQKGHQLERLSLNSCWRLTDAGISSVLMMDRFPRLAVLEIRRLTRLQQLRPIVEFKKRQMRRKIAVLVEACEELEARLRAEERSLDLEISTRIFEDISEWLNGDDLQDQIEERNLQQFVQRRSVLV</sequence>
<accession>Q8J2J3</accession>
<accession>E7R1T1</accession>
<accession>W1QIG3</accession>
<feature type="chain" id="PRO_0000277846" description="Antagonist of mitotic exit network protein 1">
    <location>
        <begin position="1"/>
        <end position="511"/>
    </location>
</feature>
<feature type="region of interest" description="Disordered" evidence="3">
    <location>
        <begin position="1"/>
        <end position="34"/>
    </location>
</feature>
<feature type="compositionally biased region" description="Basic and acidic residues" evidence="3">
    <location>
        <begin position="17"/>
        <end position="34"/>
    </location>
</feature>
<name>AMN1_OGAPD</name>
<reference key="1">
    <citation type="journal article" date="2002" name="Yeast">
        <title>Sequencing and functional analysis of the Hansenula polymorpha genomic fragment containing the YPT1 and PMI40 genes.</title>
        <authorList>
            <person name="Kim M.W."/>
            <person name="Agaphonov M.O."/>
            <person name="Kim J.Y."/>
            <person name="Rhee S.K."/>
            <person name="Kang H.A."/>
        </authorList>
    </citation>
    <scope>NUCLEOTIDE SEQUENCE [GENOMIC DNA]</scope>
    <source>
        <strain>ATCC 26012 / BCRC 20466 / JCM 22074 / NRRL Y-7560 / DL-1</strain>
    </source>
</reference>
<reference key="2">
    <citation type="journal article" date="2013" name="BMC Genomics">
        <title>Genome sequence and analysis of methylotrophic yeast Hansenula polymorpha DL1.</title>
        <authorList>
            <person name="Ravin N.V."/>
            <person name="Eldarov M.A."/>
            <person name="Kadnikov V.V."/>
            <person name="Beletsky A.V."/>
            <person name="Schneider J."/>
            <person name="Mardanova E.S."/>
            <person name="Smekalova E.M."/>
            <person name="Zvereva M.I."/>
            <person name="Dontsova O.A."/>
            <person name="Mardanov A.V."/>
            <person name="Skryabin K.G."/>
        </authorList>
    </citation>
    <scope>NUCLEOTIDE SEQUENCE [LARGE SCALE GENOMIC DNA]</scope>
    <source>
        <strain>ATCC 26012 / BCRC 20466 / JCM 22074 / NRRL Y-7560 / DL-1</strain>
    </source>
</reference>